<gene>
    <name evidence="1" type="primary">nhaP2</name>
    <name type="synonym">cvrA</name>
    <name type="ordered locus">SbBS512_E1349</name>
</gene>
<keyword id="KW-0050">Antiport</keyword>
<keyword id="KW-0997">Cell inner membrane</keyword>
<keyword id="KW-1003">Cell membrane</keyword>
<keyword id="KW-0406">Ion transport</keyword>
<keyword id="KW-0472">Membrane</keyword>
<keyword id="KW-0630">Potassium</keyword>
<keyword id="KW-0633">Potassium transport</keyword>
<keyword id="KW-1185">Reference proteome</keyword>
<keyword id="KW-0812">Transmembrane</keyword>
<keyword id="KW-1133">Transmembrane helix</keyword>
<keyword id="KW-0813">Transport</keyword>
<reference key="1">
    <citation type="submission" date="2008-05" db="EMBL/GenBank/DDBJ databases">
        <title>Complete sequence of Shigella boydii serotype 18 strain BS512.</title>
        <authorList>
            <person name="Rasko D.A."/>
            <person name="Rosovitz M."/>
            <person name="Maurelli A.T."/>
            <person name="Myers G."/>
            <person name="Seshadri R."/>
            <person name="Cer R."/>
            <person name="Jiang L."/>
            <person name="Ravel J."/>
            <person name="Sebastian Y."/>
        </authorList>
    </citation>
    <scope>NUCLEOTIDE SEQUENCE [LARGE SCALE GENOMIC DNA]</scope>
    <source>
        <strain>CDC 3083-94 / BS512</strain>
    </source>
</reference>
<sequence>MDATTIISLFILGSILVTSSILLSSFSSRLGIPILVIFLAIGMLAGVDGVGGIPFDNYPFAYMVSNLALAIILLDGGMRTQASSFRVALGPALSLATLGVLITSGLTGMMAAWLFNLDLIEGLLIGAIVGSTDAAAVFSLLGGKGLNERVGSTLEIESGSNDPMAVFLTITLIAMIQQHESSVSWMFVVDILQQFGLGIVIGLGGGYLLLQMINRIALPAGLYPLLALSGGILIFALTTALEGSGILAVYLCGFLLGNRPIRNRYGILQNFDGLAWLAQIAMFLVLGLLVNPSDLLPIAIPALILSAWMIFFARPLSVFAGLLPFRGFNLRERVFISWVGLRGAVPIILAVFPMMAGLENARLFFNVAFFVVLVSLLLQGTSLSWAAKKAKVVVPPVGRPVSRVGLDIHPENPWEQFVYQLSADKWCVGAALRDLHMPKETRIAALFRDNQLLHPTGSTRLREGDVLCVIGRERDLPALGKLFSQSPPVALDQRFFGDFILEASAKYADVALIYGLEDGREYRDKQQTLGEIVQQLLGAAPVVGDQVEFAGMIWTVAEKEDNEVLKIGVRVAEEEAES</sequence>
<evidence type="ECO:0000255" key="1">
    <source>
        <dbReference type="HAMAP-Rule" id="MF_01075"/>
    </source>
</evidence>
<comment type="function">
    <text evidence="1">K(+)/H(+) antiporter that extrudes potassium in exchange for external protons and maintains the internal concentration of potassium under toxic levels.</text>
</comment>
<comment type="catalytic activity">
    <reaction evidence="1">
        <text>K(+)(in) + H(+)(out) = K(+)(out) + H(+)(in)</text>
        <dbReference type="Rhea" id="RHEA:29467"/>
        <dbReference type="ChEBI" id="CHEBI:15378"/>
        <dbReference type="ChEBI" id="CHEBI:29103"/>
    </reaction>
    <physiologicalReaction direction="left-to-right" evidence="1">
        <dbReference type="Rhea" id="RHEA:29468"/>
    </physiologicalReaction>
</comment>
<comment type="subcellular location">
    <subcellularLocation>
        <location evidence="1">Cell inner membrane</location>
        <topology evidence="1">Multi-pass membrane protein</topology>
    </subcellularLocation>
</comment>
<comment type="similarity">
    <text evidence="1">Belongs to the monovalent cation:proton antiporter 1 (CPA1) transporter (TC 2.A.36) family. NhaP2 subfamily.</text>
</comment>
<name>NHAP2_SHIB3</name>
<dbReference type="EMBL" id="CP001063">
    <property type="protein sequence ID" value="ACD08590.1"/>
    <property type="molecule type" value="Genomic_DNA"/>
</dbReference>
<dbReference type="RefSeq" id="WP_000340206.1">
    <property type="nucleotide sequence ID" value="NC_010658.1"/>
</dbReference>
<dbReference type="SMR" id="B2TZB6"/>
<dbReference type="STRING" id="344609.SbBS512_E1349"/>
<dbReference type="KEGG" id="sbc:SbBS512_E1349"/>
<dbReference type="HOGENOM" id="CLU_005912_9_2_6"/>
<dbReference type="Proteomes" id="UP000001030">
    <property type="component" value="Chromosome"/>
</dbReference>
<dbReference type="GO" id="GO:0005886">
    <property type="term" value="C:plasma membrane"/>
    <property type="evidence" value="ECO:0007669"/>
    <property type="project" value="UniProtKB-SubCell"/>
</dbReference>
<dbReference type="GO" id="GO:0050660">
    <property type="term" value="F:flavin adenine dinucleotide binding"/>
    <property type="evidence" value="ECO:0007669"/>
    <property type="project" value="InterPro"/>
</dbReference>
<dbReference type="GO" id="GO:0015386">
    <property type="term" value="F:potassium:proton antiporter activity"/>
    <property type="evidence" value="ECO:0007669"/>
    <property type="project" value="UniProtKB-UniRule"/>
</dbReference>
<dbReference type="GO" id="GO:0006884">
    <property type="term" value="P:cell volume homeostasis"/>
    <property type="evidence" value="ECO:0007669"/>
    <property type="project" value="InterPro"/>
</dbReference>
<dbReference type="FunFam" id="1.20.1530.20:FF:000002">
    <property type="entry name" value="K(+)/H(+) antiporter NhaP2"/>
    <property type="match status" value="1"/>
</dbReference>
<dbReference type="FunFam" id="3.30.465.10:FF:000009">
    <property type="entry name" value="K(+)/H(+) antiporter NhaP2"/>
    <property type="match status" value="1"/>
</dbReference>
<dbReference type="FunFam" id="3.30.70.1450:FF:000007">
    <property type="entry name" value="K(+)/H(+) antiporter NhaP2"/>
    <property type="match status" value="1"/>
</dbReference>
<dbReference type="Gene3D" id="1.20.1530.20">
    <property type="match status" value="1"/>
</dbReference>
<dbReference type="Gene3D" id="3.30.465.10">
    <property type="match status" value="1"/>
</dbReference>
<dbReference type="Gene3D" id="3.30.70.1450">
    <property type="entry name" value="Regulator of K+ conductance, C-terminal domain"/>
    <property type="match status" value="1"/>
</dbReference>
<dbReference type="HAMAP" id="MF_01075">
    <property type="entry name" value="NhaP2"/>
    <property type="match status" value="1"/>
</dbReference>
<dbReference type="InterPro" id="IPR006153">
    <property type="entry name" value="Cation/H_exchanger_TM"/>
</dbReference>
<dbReference type="InterPro" id="IPR036318">
    <property type="entry name" value="FAD-bd_PCMH-like_sf"/>
</dbReference>
<dbReference type="InterPro" id="IPR016169">
    <property type="entry name" value="FAD-bd_PCMH_sub2"/>
</dbReference>
<dbReference type="InterPro" id="IPR038770">
    <property type="entry name" value="Na+/solute_symporter_sf"/>
</dbReference>
<dbReference type="InterPro" id="IPR023729">
    <property type="entry name" value="NhaP2"/>
</dbReference>
<dbReference type="InterPro" id="IPR006037">
    <property type="entry name" value="RCK_C"/>
</dbReference>
<dbReference type="InterPro" id="IPR036721">
    <property type="entry name" value="RCK_C_sf"/>
</dbReference>
<dbReference type="InterPro" id="IPR005170">
    <property type="entry name" value="Transptr-assoc_dom"/>
</dbReference>
<dbReference type="NCBIfam" id="NF003714">
    <property type="entry name" value="PRK05326.1-1"/>
    <property type="match status" value="1"/>
</dbReference>
<dbReference type="NCBIfam" id="NF003715">
    <property type="entry name" value="PRK05326.1-2"/>
    <property type="match status" value="1"/>
</dbReference>
<dbReference type="NCBIfam" id="NF003716">
    <property type="entry name" value="PRK05326.1-3"/>
    <property type="match status" value="1"/>
</dbReference>
<dbReference type="PANTHER" id="PTHR32507:SF7">
    <property type="entry name" value="K(+)_H(+) ANTIPORTER NHAP2"/>
    <property type="match status" value="1"/>
</dbReference>
<dbReference type="PANTHER" id="PTHR32507">
    <property type="entry name" value="NA(+)/H(+) ANTIPORTER 1"/>
    <property type="match status" value="1"/>
</dbReference>
<dbReference type="Pfam" id="PF03471">
    <property type="entry name" value="CorC_HlyC"/>
    <property type="match status" value="1"/>
</dbReference>
<dbReference type="Pfam" id="PF00999">
    <property type="entry name" value="Na_H_Exchanger"/>
    <property type="match status" value="1"/>
</dbReference>
<dbReference type="Pfam" id="PF02080">
    <property type="entry name" value="TrkA_C"/>
    <property type="match status" value="1"/>
</dbReference>
<dbReference type="SMART" id="SM01091">
    <property type="entry name" value="CorC_HlyC"/>
    <property type="match status" value="1"/>
</dbReference>
<dbReference type="SUPFAM" id="SSF56176">
    <property type="entry name" value="FAD-binding/transporter-associated domain-like"/>
    <property type="match status" value="1"/>
</dbReference>
<dbReference type="SUPFAM" id="SSF116726">
    <property type="entry name" value="TrkA C-terminal domain-like"/>
    <property type="match status" value="1"/>
</dbReference>
<dbReference type="PROSITE" id="PS51202">
    <property type="entry name" value="RCK_C"/>
    <property type="match status" value="1"/>
</dbReference>
<protein>
    <recommendedName>
        <fullName evidence="1">K(+)/H(+) antiporter NhaP2</fullName>
    </recommendedName>
    <alternativeName>
        <fullName evidence="1">Potassium/proton antiporter NhaP2</fullName>
    </alternativeName>
</protein>
<accession>B2TZB6</accession>
<feature type="chain" id="PRO_1000136717" description="K(+)/H(+) antiporter NhaP2">
    <location>
        <begin position="1"/>
        <end position="578"/>
    </location>
</feature>
<feature type="transmembrane region" description="Helical" evidence="1">
    <location>
        <begin position="6"/>
        <end position="26"/>
    </location>
</feature>
<feature type="transmembrane region" description="Helical" evidence="1">
    <location>
        <begin position="30"/>
        <end position="50"/>
    </location>
</feature>
<feature type="transmembrane region" description="Helical" evidence="1">
    <location>
        <begin position="58"/>
        <end position="78"/>
    </location>
</feature>
<feature type="transmembrane region" description="Helical" evidence="1">
    <location>
        <begin position="87"/>
        <end position="107"/>
    </location>
</feature>
<feature type="transmembrane region" description="Helical" evidence="1">
    <location>
        <begin position="109"/>
        <end position="129"/>
    </location>
</feature>
<feature type="transmembrane region" description="Helical" evidence="1">
    <location>
        <begin position="156"/>
        <end position="176"/>
    </location>
</feature>
<feature type="transmembrane region" description="Helical" evidence="1">
    <location>
        <begin position="185"/>
        <end position="205"/>
    </location>
</feature>
<feature type="transmembrane region" description="Helical" evidence="1">
    <location>
        <begin position="216"/>
        <end position="236"/>
    </location>
</feature>
<feature type="transmembrane region" description="Helical" evidence="1">
    <location>
        <begin position="237"/>
        <end position="257"/>
    </location>
</feature>
<feature type="transmembrane region" description="Helical" evidence="1">
    <location>
        <begin position="270"/>
        <end position="290"/>
    </location>
</feature>
<feature type="transmembrane region" description="Helical" evidence="1">
    <location>
        <begin position="293"/>
        <end position="313"/>
    </location>
</feature>
<feature type="transmembrane region" description="Helical" evidence="1">
    <location>
        <begin position="334"/>
        <end position="354"/>
    </location>
</feature>
<feature type="transmembrane region" description="Helical" evidence="1">
    <location>
        <begin position="363"/>
        <end position="383"/>
    </location>
</feature>
<feature type="domain" description="RCK C-terminal" evidence="1">
    <location>
        <begin position="403"/>
        <end position="485"/>
    </location>
</feature>
<proteinExistence type="inferred from homology"/>
<organism>
    <name type="scientific">Shigella boydii serotype 18 (strain CDC 3083-94 / BS512)</name>
    <dbReference type="NCBI Taxonomy" id="344609"/>
    <lineage>
        <taxon>Bacteria</taxon>
        <taxon>Pseudomonadati</taxon>
        <taxon>Pseudomonadota</taxon>
        <taxon>Gammaproteobacteria</taxon>
        <taxon>Enterobacterales</taxon>
        <taxon>Enterobacteriaceae</taxon>
        <taxon>Shigella</taxon>
    </lineage>
</organism>